<comment type="function">
    <text evidence="1">Binds together with bS18 to 16S ribosomal RNA.</text>
</comment>
<comment type="similarity">
    <text evidence="1">Belongs to the bacterial ribosomal protein bS6 family.</text>
</comment>
<reference key="1">
    <citation type="journal article" date="2011" name="J. Bacteriol.">
        <title>Genome of Ochrobactrum anthropi ATCC 49188 T, a versatile opportunistic pathogen and symbiont of several eukaryotic hosts.</title>
        <authorList>
            <person name="Chain P.S."/>
            <person name="Lang D.M."/>
            <person name="Comerci D.J."/>
            <person name="Malfatti S.A."/>
            <person name="Vergez L.M."/>
            <person name="Shin M."/>
            <person name="Ugalde R.A."/>
            <person name="Garcia E."/>
            <person name="Tolmasky M.E."/>
        </authorList>
    </citation>
    <scope>NUCLEOTIDE SEQUENCE [LARGE SCALE GENOMIC DNA]</scope>
    <source>
        <strain>ATCC 49188 / DSM 6882 / CCUG 24695 / JCM 21032 / LMG 3331 / NBRC 15819 / NCTC 12168 / Alc 37</strain>
    </source>
</reference>
<feature type="chain" id="PRO_1000005305" description="Small ribosomal subunit protein bS6">
    <location>
        <begin position="1"/>
        <end position="151"/>
    </location>
</feature>
<feature type="region of interest" description="Disordered" evidence="2">
    <location>
        <begin position="96"/>
        <end position="151"/>
    </location>
</feature>
<gene>
    <name evidence="1" type="primary">rpsF</name>
    <name type="ordered locus">Oant_0569</name>
</gene>
<evidence type="ECO:0000255" key="1">
    <source>
        <dbReference type="HAMAP-Rule" id="MF_00360"/>
    </source>
</evidence>
<evidence type="ECO:0000256" key="2">
    <source>
        <dbReference type="SAM" id="MobiDB-lite"/>
    </source>
</evidence>
<evidence type="ECO:0000305" key="3"/>
<accession>A6WWE6</accession>
<sequence length="151" mass="17365">MALYEHVLLARQDISQQQVDALVEQYKGVLEANGGKVGKVESWGLRPLTYRIKKNRKAYYTLVNIDAPAAAVAEMERQMRINEDVLRFLTVRVEEHEEGQSAMLTRRDDRRERDGDDRPRRREGGFDRGDRGDRGDRGPRRPRDNEAGEGA</sequence>
<keyword id="KW-1185">Reference proteome</keyword>
<keyword id="KW-0687">Ribonucleoprotein</keyword>
<keyword id="KW-0689">Ribosomal protein</keyword>
<keyword id="KW-0694">RNA-binding</keyword>
<keyword id="KW-0699">rRNA-binding</keyword>
<name>RS6_BRUA4</name>
<dbReference type="EMBL" id="CP000758">
    <property type="protein sequence ID" value="ABS13300.1"/>
    <property type="molecule type" value="Genomic_DNA"/>
</dbReference>
<dbReference type="RefSeq" id="WP_010658387.1">
    <property type="nucleotide sequence ID" value="NC_009667.1"/>
</dbReference>
<dbReference type="SMR" id="A6WWE6"/>
<dbReference type="STRING" id="439375.Oant_0569"/>
<dbReference type="GeneID" id="61316739"/>
<dbReference type="KEGG" id="oan:Oant_0569"/>
<dbReference type="eggNOG" id="COG0360">
    <property type="taxonomic scope" value="Bacteria"/>
</dbReference>
<dbReference type="HOGENOM" id="CLU_113441_2_0_5"/>
<dbReference type="PhylomeDB" id="A6WWE6"/>
<dbReference type="Proteomes" id="UP000002301">
    <property type="component" value="Chromosome 1"/>
</dbReference>
<dbReference type="GO" id="GO:0022627">
    <property type="term" value="C:cytosolic small ribosomal subunit"/>
    <property type="evidence" value="ECO:0007669"/>
    <property type="project" value="TreeGrafter"/>
</dbReference>
<dbReference type="GO" id="GO:0070181">
    <property type="term" value="F:small ribosomal subunit rRNA binding"/>
    <property type="evidence" value="ECO:0007669"/>
    <property type="project" value="TreeGrafter"/>
</dbReference>
<dbReference type="GO" id="GO:0003735">
    <property type="term" value="F:structural constituent of ribosome"/>
    <property type="evidence" value="ECO:0007669"/>
    <property type="project" value="InterPro"/>
</dbReference>
<dbReference type="GO" id="GO:0006412">
    <property type="term" value="P:translation"/>
    <property type="evidence" value="ECO:0007669"/>
    <property type="project" value="UniProtKB-UniRule"/>
</dbReference>
<dbReference type="CDD" id="cd00473">
    <property type="entry name" value="bS6"/>
    <property type="match status" value="1"/>
</dbReference>
<dbReference type="Gene3D" id="3.30.70.60">
    <property type="match status" value="1"/>
</dbReference>
<dbReference type="HAMAP" id="MF_00360">
    <property type="entry name" value="Ribosomal_bS6"/>
    <property type="match status" value="1"/>
</dbReference>
<dbReference type="InterPro" id="IPR000529">
    <property type="entry name" value="Ribosomal_bS6"/>
</dbReference>
<dbReference type="InterPro" id="IPR035980">
    <property type="entry name" value="Ribosomal_bS6_sf"/>
</dbReference>
<dbReference type="InterPro" id="IPR020814">
    <property type="entry name" value="Ribosomal_S6_plastid/chlpt"/>
</dbReference>
<dbReference type="InterPro" id="IPR014717">
    <property type="entry name" value="Transl_elong_EF1B/ribsomal_bS6"/>
</dbReference>
<dbReference type="NCBIfam" id="TIGR00166">
    <property type="entry name" value="S6"/>
    <property type="match status" value="1"/>
</dbReference>
<dbReference type="PANTHER" id="PTHR21011">
    <property type="entry name" value="MITOCHONDRIAL 28S RIBOSOMAL PROTEIN S6"/>
    <property type="match status" value="1"/>
</dbReference>
<dbReference type="PANTHER" id="PTHR21011:SF1">
    <property type="entry name" value="SMALL RIBOSOMAL SUBUNIT PROTEIN BS6M"/>
    <property type="match status" value="1"/>
</dbReference>
<dbReference type="Pfam" id="PF01250">
    <property type="entry name" value="Ribosomal_S6"/>
    <property type="match status" value="1"/>
</dbReference>
<dbReference type="SUPFAM" id="SSF54995">
    <property type="entry name" value="Ribosomal protein S6"/>
    <property type="match status" value="1"/>
</dbReference>
<organism>
    <name type="scientific">Brucella anthropi (strain ATCC 49188 / DSM 6882 / CCUG 24695 / JCM 21032 / LMG 3331 / NBRC 15819 / NCTC 12168 / Alc 37)</name>
    <name type="common">Ochrobactrum anthropi</name>
    <dbReference type="NCBI Taxonomy" id="439375"/>
    <lineage>
        <taxon>Bacteria</taxon>
        <taxon>Pseudomonadati</taxon>
        <taxon>Pseudomonadota</taxon>
        <taxon>Alphaproteobacteria</taxon>
        <taxon>Hyphomicrobiales</taxon>
        <taxon>Brucellaceae</taxon>
        <taxon>Brucella/Ochrobactrum group</taxon>
        <taxon>Brucella</taxon>
    </lineage>
</organism>
<proteinExistence type="inferred from homology"/>
<protein>
    <recommendedName>
        <fullName evidence="1">Small ribosomal subunit protein bS6</fullName>
    </recommendedName>
    <alternativeName>
        <fullName evidence="3">30S ribosomal protein S6</fullName>
    </alternativeName>
</protein>